<protein>
    <recommendedName>
        <fullName evidence="1">Octanoyltransferase</fullName>
        <ecNumber evidence="1">2.3.1.181</ecNumber>
    </recommendedName>
    <alternativeName>
        <fullName evidence="1">Lipoate-protein ligase B</fullName>
    </alternativeName>
    <alternativeName>
        <fullName evidence="1">Lipoyl/octanoyl transferase</fullName>
    </alternativeName>
    <alternativeName>
        <fullName evidence="1">Octanoyl-[acyl-carrier-protein]-protein N-octanoyltransferase</fullName>
    </alternativeName>
</protein>
<sequence>MQHNKILIRQLGLQPYEPISQAMHEFTDARDEDTLDEIWLVEHHPVFTQGQAGKAEHVLVPGDIPVIQSDRGGQVTYHGPGQQVMYVLLNLKRRKLGVRELVTLLEQTVVNTLAEYGIESHPRADAPGVYVGDRKICSLGLRIRKGCSFHGLALNIAMDLAPFLRINPCGYAGMEMTQMRQWQPEVTPETVAPRLVANLLALLNHPPHEYLPQQ</sequence>
<organism>
    <name type="scientific">Klebsiella pneumoniae (strain 342)</name>
    <dbReference type="NCBI Taxonomy" id="507522"/>
    <lineage>
        <taxon>Bacteria</taxon>
        <taxon>Pseudomonadati</taxon>
        <taxon>Pseudomonadota</taxon>
        <taxon>Gammaproteobacteria</taxon>
        <taxon>Enterobacterales</taxon>
        <taxon>Enterobacteriaceae</taxon>
        <taxon>Klebsiella/Raoultella group</taxon>
        <taxon>Klebsiella</taxon>
        <taxon>Klebsiella pneumoniae complex</taxon>
    </lineage>
</organism>
<accession>B5XZS4</accession>
<dbReference type="EC" id="2.3.1.181" evidence="1"/>
<dbReference type="EMBL" id="CP000964">
    <property type="protein sequence ID" value="ACI07917.1"/>
    <property type="molecule type" value="Genomic_DNA"/>
</dbReference>
<dbReference type="SMR" id="B5XZS4"/>
<dbReference type="KEGG" id="kpe:KPK_3911"/>
<dbReference type="HOGENOM" id="CLU_035168_3_1_6"/>
<dbReference type="UniPathway" id="UPA00538">
    <property type="reaction ID" value="UER00592"/>
</dbReference>
<dbReference type="Proteomes" id="UP000001734">
    <property type="component" value="Chromosome"/>
</dbReference>
<dbReference type="GO" id="GO:0005737">
    <property type="term" value="C:cytoplasm"/>
    <property type="evidence" value="ECO:0007669"/>
    <property type="project" value="UniProtKB-SubCell"/>
</dbReference>
<dbReference type="GO" id="GO:0033819">
    <property type="term" value="F:lipoyl(octanoyl) transferase activity"/>
    <property type="evidence" value="ECO:0007669"/>
    <property type="project" value="UniProtKB-EC"/>
</dbReference>
<dbReference type="GO" id="GO:0036211">
    <property type="term" value="P:protein modification process"/>
    <property type="evidence" value="ECO:0007669"/>
    <property type="project" value="InterPro"/>
</dbReference>
<dbReference type="CDD" id="cd16444">
    <property type="entry name" value="LipB"/>
    <property type="match status" value="1"/>
</dbReference>
<dbReference type="FunFam" id="3.30.930.10:FF:000020">
    <property type="entry name" value="Octanoyltransferase"/>
    <property type="match status" value="1"/>
</dbReference>
<dbReference type="Gene3D" id="3.30.930.10">
    <property type="entry name" value="Bira Bifunctional Protein, Domain 2"/>
    <property type="match status" value="1"/>
</dbReference>
<dbReference type="HAMAP" id="MF_00013">
    <property type="entry name" value="LipB"/>
    <property type="match status" value="1"/>
</dbReference>
<dbReference type="InterPro" id="IPR045864">
    <property type="entry name" value="aa-tRNA-synth_II/BPL/LPL"/>
</dbReference>
<dbReference type="InterPro" id="IPR004143">
    <property type="entry name" value="BPL_LPL_catalytic"/>
</dbReference>
<dbReference type="InterPro" id="IPR000544">
    <property type="entry name" value="Octanoyltransferase"/>
</dbReference>
<dbReference type="InterPro" id="IPR020605">
    <property type="entry name" value="Octanoyltransferase_CS"/>
</dbReference>
<dbReference type="NCBIfam" id="TIGR00214">
    <property type="entry name" value="lipB"/>
    <property type="match status" value="1"/>
</dbReference>
<dbReference type="NCBIfam" id="NF010922">
    <property type="entry name" value="PRK14342.1"/>
    <property type="match status" value="1"/>
</dbReference>
<dbReference type="PANTHER" id="PTHR10993:SF7">
    <property type="entry name" value="LIPOYLTRANSFERASE 2, MITOCHONDRIAL-RELATED"/>
    <property type="match status" value="1"/>
</dbReference>
<dbReference type="PANTHER" id="PTHR10993">
    <property type="entry name" value="OCTANOYLTRANSFERASE"/>
    <property type="match status" value="1"/>
</dbReference>
<dbReference type="Pfam" id="PF21948">
    <property type="entry name" value="LplA-B_cat"/>
    <property type="match status" value="1"/>
</dbReference>
<dbReference type="PIRSF" id="PIRSF016262">
    <property type="entry name" value="LPLase"/>
    <property type="match status" value="1"/>
</dbReference>
<dbReference type="SUPFAM" id="SSF55681">
    <property type="entry name" value="Class II aaRS and biotin synthetases"/>
    <property type="match status" value="1"/>
</dbReference>
<dbReference type="PROSITE" id="PS51733">
    <property type="entry name" value="BPL_LPL_CATALYTIC"/>
    <property type="match status" value="1"/>
</dbReference>
<dbReference type="PROSITE" id="PS01313">
    <property type="entry name" value="LIPB"/>
    <property type="match status" value="1"/>
</dbReference>
<reference key="1">
    <citation type="journal article" date="2008" name="PLoS Genet.">
        <title>Complete genome sequence of the N2-fixing broad host range endophyte Klebsiella pneumoniae 342 and virulence predictions verified in mice.</title>
        <authorList>
            <person name="Fouts D.E."/>
            <person name="Tyler H.L."/>
            <person name="DeBoy R.T."/>
            <person name="Daugherty S."/>
            <person name="Ren Q."/>
            <person name="Badger J.H."/>
            <person name="Durkin A.S."/>
            <person name="Huot H."/>
            <person name="Shrivastava S."/>
            <person name="Kothari S."/>
            <person name="Dodson R.J."/>
            <person name="Mohamoud Y."/>
            <person name="Khouri H."/>
            <person name="Roesch L.F.W."/>
            <person name="Krogfelt K.A."/>
            <person name="Struve C."/>
            <person name="Triplett E.W."/>
            <person name="Methe B.A."/>
        </authorList>
    </citation>
    <scope>NUCLEOTIDE SEQUENCE [LARGE SCALE GENOMIC DNA]</scope>
    <source>
        <strain>342</strain>
    </source>
</reference>
<comment type="function">
    <text evidence="1">Catalyzes the transfer of endogenously produced octanoic acid from octanoyl-acyl-carrier-protein onto the lipoyl domains of lipoate-dependent enzymes. Lipoyl-ACP can also act as a substrate although octanoyl-ACP is likely to be the physiological substrate.</text>
</comment>
<comment type="catalytic activity">
    <reaction evidence="1">
        <text>octanoyl-[ACP] + L-lysyl-[protein] = N(6)-octanoyl-L-lysyl-[protein] + holo-[ACP] + H(+)</text>
        <dbReference type="Rhea" id="RHEA:17665"/>
        <dbReference type="Rhea" id="RHEA-COMP:9636"/>
        <dbReference type="Rhea" id="RHEA-COMP:9685"/>
        <dbReference type="Rhea" id="RHEA-COMP:9752"/>
        <dbReference type="Rhea" id="RHEA-COMP:9928"/>
        <dbReference type="ChEBI" id="CHEBI:15378"/>
        <dbReference type="ChEBI" id="CHEBI:29969"/>
        <dbReference type="ChEBI" id="CHEBI:64479"/>
        <dbReference type="ChEBI" id="CHEBI:78463"/>
        <dbReference type="ChEBI" id="CHEBI:78809"/>
        <dbReference type="EC" id="2.3.1.181"/>
    </reaction>
</comment>
<comment type="pathway">
    <text evidence="1">Protein modification; protein lipoylation via endogenous pathway; protein N(6)-(lipoyl)lysine from octanoyl-[acyl-carrier-protein]: step 1/2.</text>
</comment>
<comment type="subcellular location">
    <subcellularLocation>
        <location evidence="1">Cytoplasm</location>
    </subcellularLocation>
</comment>
<comment type="miscellaneous">
    <text evidence="1">In the reaction, the free carboxyl group of octanoic acid is attached via an amide linkage to the epsilon-amino group of a specific lysine residue of lipoyl domains of lipoate-dependent enzymes.</text>
</comment>
<comment type="similarity">
    <text evidence="1">Belongs to the LipB family.</text>
</comment>
<proteinExistence type="inferred from homology"/>
<evidence type="ECO:0000255" key="1">
    <source>
        <dbReference type="HAMAP-Rule" id="MF_00013"/>
    </source>
</evidence>
<evidence type="ECO:0000255" key="2">
    <source>
        <dbReference type="PROSITE-ProRule" id="PRU01067"/>
    </source>
</evidence>
<feature type="chain" id="PRO_1000089460" description="Octanoyltransferase">
    <location>
        <begin position="1"/>
        <end position="214"/>
    </location>
</feature>
<feature type="domain" description="BPL/LPL catalytic" evidence="2">
    <location>
        <begin position="32"/>
        <end position="207"/>
    </location>
</feature>
<feature type="active site" description="Acyl-thioester intermediate" evidence="1">
    <location>
        <position position="169"/>
    </location>
</feature>
<feature type="binding site" evidence="1">
    <location>
        <begin position="71"/>
        <end position="78"/>
    </location>
    <ligand>
        <name>substrate</name>
    </ligand>
</feature>
<feature type="binding site" evidence="1">
    <location>
        <begin position="138"/>
        <end position="140"/>
    </location>
    <ligand>
        <name>substrate</name>
    </ligand>
</feature>
<feature type="binding site" evidence="1">
    <location>
        <begin position="151"/>
        <end position="153"/>
    </location>
    <ligand>
        <name>substrate</name>
    </ligand>
</feature>
<feature type="site" description="Lowers pKa of active site Cys" evidence="1">
    <location>
        <position position="135"/>
    </location>
</feature>
<gene>
    <name evidence="1" type="primary">lipB</name>
    <name type="ordered locus">KPK_3911</name>
</gene>
<keyword id="KW-0012">Acyltransferase</keyword>
<keyword id="KW-0963">Cytoplasm</keyword>
<keyword id="KW-0808">Transferase</keyword>
<name>LIPB_KLEP3</name>